<proteinExistence type="evidence at protein level"/>
<keyword id="KW-0002">3D-structure</keyword>
<keyword id="KW-0119">Carbohydrate metabolism</keyword>
<keyword id="KW-1015">Disulfide bond</keyword>
<keyword id="KW-0256">Endoplasmic reticulum</keyword>
<keyword id="KW-0294">Fucose metabolism</keyword>
<keyword id="KW-0325">Glycoprotein</keyword>
<keyword id="KW-0328">Glycosyltransferase</keyword>
<keyword id="KW-0464">Manganese</keyword>
<keyword id="KW-0914">Notch signaling pathway</keyword>
<keyword id="KW-1185">Reference proteome</keyword>
<keyword id="KW-0732">Signal</keyword>
<keyword id="KW-0808">Transferase</keyword>
<gene>
    <name evidence="6" type="primary">pfut-1</name>
    <name evidence="6" type="ORF">C15C7.7</name>
</gene>
<sequence>MRVSKVLTLASFISVCSYSEAKSNETDPNGYIVFCPCMGRFGNQVDQFLGVLAFAKALDRTLVLPNFIEFKHPETKMIPFEFLFQVGTVAKYTRVVTMQEFTKKIMPTVWPPEKRKAFCWTPRQAIYDKSAEPGCHSKEGNPFGPYWDQIDVSFVGDEYFGDIPGGFDLNQMGSRKKWLEKFPSEEYPVLAFSSAPAPFPSKGKVWSIQKYLRWSSRITEQAKKFISANLAKPFVAVHLRNDADWVRVCEHIDTTTNRPLFASEQCLGEGHHLGTLTKEICSPSKQQILEQIVEKVGSIGAKSVFVASDKDHMIDEINEALKPYEIEAHRQEPDDMYTSLAIMGRADLFVGNCVSTFSHIVKRERDHAGQSPRPSAFFGIRAVKRHIDL</sequence>
<reference key="1">
    <citation type="journal article" date="1998" name="Science">
        <title>Genome sequence of the nematode C. elegans: a platform for investigating biology.</title>
        <authorList>
            <consortium name="The C. elegans sequencing consortium"/>
        </authorList>
    </citation>
    <scope>NUCLEOTIDE SEQUENCE [LARGE SCALE GENOMIC DNA]</scope>
    <source>
        <strain>Bristol N2</strain>
    </source>
</reference>
<reference evidence="5" key="2">
    <citation type="journal article" date="2001" name="J. Biol. Chem.">
        <title>Modification of epidermal growth factor-like repeats with O-fucose: molecular cloning and expression of a novel GDP-fucose protein O-fucosyltransferase.</title>
        <authorList>
            <person name="Wang Y."/>
            <person name="Shao L."/>
            <person name="Shi S."/>
            <person name="Harris R.J."/>
            <person name="Spellman M.W."/>
            <person name="Stanley P."/>
            <person name="Haltiwanger R.S."/>
        </authorList>
    </citation>
    <scope>HOMOLOGY</scope>
</reference>
<reference key="3">
    <citation type="journal article" date="2011" name="PLoS ONE">
        <title>Structural insights into the mechanism of protein O-fucosylation.</title>
        <authorList>
            <person name="Lira-Navarrete E."/>
            <person name="Valero-Gonzalez J."/>
            <person name="Villanueva R."/>
            <person name="Martinez-Julvez M."/>
            <person name="Tejero T."/>
            <person name="Merino P."/>
            <person name="Panjikar S."/>
            <person name="Hurtado-Guerrero R."/>
        </authorList>
    </citation>
    <scope>X-RAY CRYSTALLOGRAPHY (1.54 ANGSTROMS) OF 26-383 IN COMPLEX WITH GDP-FUCOSE AND MANGANESE</scope>
    <scope>FUNCTION</scope>
    <scope>CATALYTIC ACTIVITY</scope>
    <scope>PATHWAY</scope>
    <scope>SUBUNIT</scope>
    <scope>DISULFIDE BONDS</scope>
    <scope>MUTAGENESIS OF ASN-43 AND ARG-240</scope>
</reference>
<comment type="function">
    <text evidence="2 4">Catalyzes the reaction that attaches fucose through an O-glycosidic linkage to a conserved serine or threonine residue found in the consensus sequence C2-X(4,5)-[S/T]-C3 of EGF domains, where C2 and C3 are the second and third conserved cysteines (PubMed:21966509). Specifically uses GDP-fucose as donor substrate and proper disulfide pairing of the substrate EGF domains is required for fucose transfer (By similarity).</text>
</comment>
<comment type="catalytic activity">
    <reaction evidence="4">
        <text>L-seryl-[protein] + GDP-beta-L-fucose = 3-O-(alpha-L-fucosyl)-L-seryl-[protein] + GDP + H(+)</text>
        <dbReference type="Rhea" id="RHEA:63644"/>
        <dbReference type="Rhea" id="RHEA-COMP:9863"/>
        <dbReference type="Rhea" id="RHEA-COMP:17914"/>
        <dbReference type="ChEBI" id="CHEBI:15378"/>
        <dbReference type="ChEBI" id="CHEBI:29999"/>
        <dbReference type="ChEBI" id="CHEBI:57273"/>
        <dbReference type="ChEBI" id="CHEBI:58189"/>
        <dbReference type="ChEBI" id="CHEBI:189632"/>
        <dbReference type="EC" id="2.4.1.221"/>
    </reaction>
    <physiologicalReaction direction="left-to-right" evidence="4">
        <dbReference type="Rhea" id="RHEA:63645"/>
    </physiologicalReaction>
</comment>
<comment type="catalytic activity">
    <reaction evidence="4">
        <text>L-threonyl-[protein] + GDP-beta-L-fucose = 3-O-(alpha-L-fucosyl)-L-threonyl-[protein] + GDP + H(+)</text>
        <dbReference type="Rhea" id="RHEA:70491"/>
        <dbReference type="Rhea" id="RHEA-COMP:11060"/>
        <dbReference type="Rhea" id="RHEA-COMP:17915"/>
        <dbReference type="ChEBI" id="CHEBI:15378"/>
        <dbReference type="ChEBI" id="CHEBI:30013"/>
        <dbReference type="ChEBI" id="CHEBI:57273"/>
        <dbReference type="ChEBI" id="CHEBI:58189"/>
        <dbReference type="ChEBI" id="CHEBI:189631"/>
        <dbReference type="EC" id="2.4.1.221"/>
    </reaction>
    <physiologicalReaction direction="left-to-right" evidence="4">
        <dbReference type="Rhea" id="RHEA:70492"/>
    </physiologicalReaction>
</comment>
<comment type="pathway">
    <text evidence="4">Protein modification; protein glycosylation.</text>
</comment>
<comment type="subunit">
    <text evidence="4">Monomer.</text>
</comment>
<comment type="subcellular location">
    <subcellularLocation>
        <location evidence="1">Endoplasmic reticulum</location>
    </subcellularLocation>
</comment>
<comment type="miscellaneous">
    <text evidence="4">Manganese is bound to the substrate GDP-fucose, but is not required for enzyme activity.</text>
</comment>
<comment type="similarity">
    <text evidence="5">Belongs to the glycosyltransferase 65 family.</text>
</comment>
<name>OFUT1_CAEEL</name>
<evidence type="ECO:0000250" key="1">
    <source>
        <dbReference type="UniProtKB" id="Q6EV70"/>
    </source>
</evidence>
<evidence type="ECO:0000250" key="2">
    <source>
        <dbReference type="UniProtKB" id="Q9H488"/>
    </source>
</evidence>
<evidence type="ECO:0000255" key="3"/>
<evidence type="ECO:0000269" key="4">
    <source>
    </source>
</evidence>
<evidence type="ECO:0000305" key="5"/>
<evidence type="ECO:0000312" key="6">
    <source>
        <dbReference type="WormBase" id="C15C7.7"/>
    </source>
</evidence>
<evidence type="ECO:0007744" key="7">
    <source>
        <dbReference type="PDB" id="3ZY2"/>
    </source>
</evidence>
<evidence type="ECO:0007744" key="8">
    <source>
        <dbReference type="PDB" id="3ZY3"/>
    </source>
</evidence>
<evidence type="ECO:0007744" key="9">
    <source>
        <dbReference type="PDB" id="3ZY5"/>
    </source>
</evidence>
<evidence type="ECO:0007744" key="10">
    <source>
        <dbReference type="PDB" id="3ZY6"/>
    </source>
</evidence>
<evidence type="ECO:0007829" key="11">
    <source>
        <dbReference type="PDB" id="3ZY2"/>
    </source>
</evidence>
<evidence type="ECO:0007829" key="12">
    <source>
        <dbReference type="PDB" id="3ZY6"/>
    </source>
</evidence>
<protein>
    <recommendedName>
        <fullName evidence="5">GDP-fucose protein O-fucosyltransferase 1</fullName>
        <ecNumber evidence="4">2.4.1.221</ecNumber>
    </recommendedName>
    <alternativeName>
        <fullName evidence="5">Peptide-O-fucosyltransferase 1</fullName>
        <shortName evidence="5">O-FucT-1</shortName>
    </alternativeName>
    <alternativeName>
        <fullName evidence="6">Protein O-fucosyltransferase 1</fullName>
    </alternativeName>
</protein>
<dbReference type="EC" id="2.4.1.221" evidence="4"/>
<dbReference type="EMBL" id="BX284606">
    <property type="protein sequence ID" value="CCD64591.1"/>
    <property type="molecule type" value="Genomic_DNA"/>
</dbReference>
<dbReference type="RefSeq" id="NP_741744.2">
    <property type="nucleotide sequence ID" value="NM_171649.8"/>
</dbReference>
<dbReference type="PDB" id="3ZY2">
    <property type="method" value="X-ray"/>
    <property type="resolution" value="1.54 A"/>
    <property type="chains" value="A=26-383"/>
</dbReference>
<dbReference type="PDB" id="3ZY3">
    <property type="method" value="X-ray"/>
    <property type="resolution" value="1.86 A"/>
    <property type="chains" value="A/B=26-383"/>
</dbReference>
<dbReference type="PDB" id="3ZY4">
    <property type="method" value="X-ray"/>
    <property type="resolution" value="1.74 A"/>
    <property type="chains" value="A=26-383"/>
</dbReference>
<dbReference type="PDB" id="3ZY5">
    <property type="method" value="X-ray"/>
    <property type="resolution" value="1.96 A"/>
    <property type="chains" value="A=26-383"/>
</dbReference>
<dbReference type="PDB" id="3ZY6">
    <property type="method" value="X-ray"/>
    <property type="resolution" value="1.91 A"/>
    <property type="chains" value="A=26-383"/>
</dbReference>
<dbReference type="PDBsum" id="3ZY2"/>
<dbReference type="PDBsum" id="3ZY3"/>
<dbReference type="PDBsum" id="3ZY4"/>
<dbReference type="PDBsum" id="3ZY5"/>
<dbReference type="PDBsum" id="3ZY6"/>
<dbReference type="SMR" id="Q18014"/>
<dbReference type="BioGRID" id="45548">
    <property type="interactions" value="1"/>
</dbReference>
<dbReference type="FunCoup" id="Q18014">
    <property type="interactions" value="2313"/>
</dbReference>
<dbReference type="STRING" id="6239.C15C7.7.1"/>
<dbReference type="CAZy" id="GT65">
    <property type="family name" value="Glycosyltransferase Family 65"/>
</dbReference>
<dbReference type="PaxDb" id="6239-C15C7.7"/>
<dbReference type="PeptideAtlas" id="Q18014"/>
<dbReference type="EnsemblMetazoa" id="C15C7.7.1">
    <property type="protein sequence ID" value="C15C7.7.1"/>
    <property type="gene ID" value="WBGene00015793"/>
</dbReference>
<dbReference type="GeneID" id="180607"/>
<dbReference type="KEGG" id="cel:CELE_C15C7.7"/>
<dbReference type="UCSC" id="C15C7.7">
    <property type="organism name" value="c. elegans"/>
</dbReference>
<dbReference type="AGR" id="WB:WBGene00015793"/>
<dbReference type="CTD" id="180607"/>
<dbReference type="WormBase" id="C15C7.7">
    <property type="protein sequence ID" value="CE36786"/>
    <property type="gene ID" value="WBGene00015793"/>
    <property type="gene designation" value="pfut-1"/>
</dbReference>
<dbReference type="eggNOG" id="KOG3202">
    <property type="taxonomic scope" value="Eukaryota"/>
</dbReference>
<dbReference type="eggNOG" id="KOG3849">
    <property type="taxonomic scope" value="Eukaryota"/>
</dbReference>
<dbReference type="GeneTree" id="ENSGT00390000015634"/>
<dbReference type="HOGENOM" id="CLU_039551_0_0_1"/>
<dbReference type="InParanoid" id="Q18014"/>
<dbReference type="OMA" id="KWQAKYP"/>
<dbReference type="OrthoDB" id="10050276at2759"/>
<dbReference type="PhylomeDB" id="Q18014"/>
<dbReference type="BRENDA" id="2.4.1.221">
    <property type="organism ID" value="1045"/>
</dbReference>
<dbReference type="UniPathway" id="UPA00378"/>
<dbReference type="EvolutionaryTrace" id="Q18014"/>
<dbReference type="PRO" id="PR:Q18014"/>
<dbReference type="Proteomes" id="UP000001940">
    <property type="component" value="Chromosome X"/>
</dbReference>
<dbReference type="Bgee" id="WBGene00015793">
    <property type="expression patterns" value="Expressed in pharyngeal muscle cell (C elegans) and 3 other cell types or tissues"/>
</dbReference>
<dbReference type="GO" id="GO:0005783">
    <property type="term" value="C:endoplasmic reticulum"/>
    <property type="evidence" value="ECO:0000250"/>
    <property type="project" value="WormBase"/>
</dbReference>
<dbReference type="GO" id="GO:0046922">
    <property type="term" value="F:peptide-O-fucosyltransferase activity"/>
    <property type="evidence" value="ECO:0000314"/>
    <property type="project" value="WormBase"/>
</dbReference>
<dbReference type="GO" id="GO:0006004">
    <property type="term" value="P:fucose metabolic process"/>
    <property type="evidence" value="ECO:0007669"/>
    <property type="project" value="UniProtKB-KW"/>
</dbReference>
<dbReference type="GO" id="GO:0007219">
    <property type="term" value="P:Notch signaling pathway"/>
    <property type="evidence" value="ECO:0007669"/>
    <property type="project" value="UniProtKB-KW"/>
</dbReference>
<dbReference type="GO" id="GO:0036066">
    <property type="term" value="P:protein O-linked fucosylation"/>
    <property type="evidence" value="ECO:0000314"/>
    <property type="project" value="WormBase"/>
</dbReference>
<dbReference type="CDD" id="cd11302">
    <property type="entry name" value="O-FucT-1"/>
    <property type="match status" value="1"/>
</dbReference>
<dbReference type="FunFam" id="3.40.50.11350:FF:000004">
    <property type="entry name" value="GDP-fucose protein O-fucosyltransferase 1"/>
    <property type="match status" value="1"/>
</dbReference>
<dbReference type="Gene3D" id="3.40.50.11340">
    <property type="match status" value="1"/>
</dbReference>
<dbReference type="Gene3D" id="3.40.50.11350">
    <property type="match status" value="1"/>
</dbReference>
<dbReference type="InterPro" id="IPR019378">
    <property type="entry name" value="GDP-Fuc_O-FucTrfase"/>
</dbReference>
<dbReference type="InterPro" id="IPR039922">
    <property type="entry name" value="POFUT1"/>
</dbReference>
<dbReference type="PANTHER" id="PTHR21420">
    <property type="entry name" value="GDP-FUCOSE PROTEIN O-FUCOSYLTRANSFERASE 1"/>
    <property type="match status" value="1"/>
</dbReference>
<dbReference type="PANTHER" id="PTHR21420:SF10">
    <property type="entry name" value="GDP-FUCOSE PROTEIN O-FUCOSYLTRANSFERASE 1"/>
    <property type="match status" value="1"/>
</dbReference>
<dbReference type="Pfam" id="PF10250">
    <property type="entry name" value="O-FucT"/>
    <property type="match status" value="1"/>
</dbReference>
<feature type="signal peptide" evidence="3">
    <location>
        <begin position="1"/>
        <end position="21"/>
    </location>
</feature>
<feature type="chain" id="PRO_0000012152" description="GDP-fucose protein O-fucosyltransferase 1">
    <location>
        <begin position="22"/>
        <end position="389"/>
    </location>
</feature>
<feature type="binding site" evidence="7 8 9 10">
    <location>
        <begin position="40"/>
        <end position="43"/>
    </location>
    <ligand>
        <name>substrate</name>
    </ligand>
</feature>
<feature type="binding site" evidence="7 8 9 10">
    <location>
        <begin position="238"/>
        <end position="240"/>
    </location>
    <ligand>
        <name>substrate</name>
    </ligand>
</feature>
<feature type="binding site" evidence="4 7 8 9 10">
    <location>
        <begin position="356"/>
        <end position="357"/>
    </location>
    <ligand>
        <name>substrate</name>
    </ligand>
</feature>
<feature type="glycosylation site" description="N-linked (GlcNAc...) asparagine" evidence="5">
    <location>
        <position position="24"/>
    </location>
</feature>
<feature type="disulfide bond" evidence="4">
    <location>
        <begin position="35"/>
        <end position="37"/>
    </location>
</feature>
<feature type="disulfide bond" evidence="4">
    <location>
        <begin position="119"/>
        <end position="135"/>
    </location>
</feature>
<feature type="disulfide bond" evidence="4">
    <location>
        <begin position="249"/>
        <end position="281"/>
    </location>
</feature>
<feature type="disulfide bond" evidence="4">
    <location>
        <begin position="266"/>
        <end position="353"/>
    </location>
</feature>
<feature type="mutagenesis site" description="Reduces enzyme activity by over 90%." evidence="4">
    <original>N</original>
    <variation>A</variation>
    <location>
        <position position="43"/>
    </location>
</feature>
<feature type="mutagenesis site" description="Abolishes enzyme activity." evidence="4">
    <original>R</original>
    <variation>A</variation>
    <variation>K</variation>
    <location>
        <position position="240"/>
    </location>
</feature>
<feature type="strand" evidence="11">
    <location>
        <begin position="31"/>
        <end position="34"/>
    </location>
</feature>
<feature type="strand" evidence="11">
    <location>
        <begin position="38"/>
        <end position="40"/>
    </location>
</feature>
<feature type="helix" evidence="11">
    <location>
        <begin position="41"/>
        <end position="58"/>
    </location>
</feature>
<feature type="strand" evidence="11">
    <location>
        <begin position="61"/>
        <end position="63"/>
    </location>
</feature>
<feature type="strand" evidence="11">
    <location>
        <begin position="67"/>
        <end position="69"/>
    </location>
</feature>
<feature type="strand" evidence="11">
    <location>
        <begin position="71"/>
        <end position="74"/>
    </location>
</feature>
<feature type="strand" evidence="11">
    <location>
        <begin position="76"/>
        <end position="78"/>
    </location>
</feature>
<feature type="helix" evidence="11">
    <location>
        <begin position="80"/>
        <end position="83"/>
    </location>
</feature>
<feature type="helix" evidence="11">
    <location>
        <begin position="86"/>
        <end position="89"/>
    </location>
</feature>
<feature type="turn" evidence="11">
    <location>
        <begin position="90"/>
        <end position="92"/>
    </location>
</feature>
<feature type="helix" evidence="11">
    <location>
        <begin position="98"/>
        <end position="104"/>
    </location>
</feature>
<feature type="helix" evidence="11">
    <location>
        <begin position="106"/>
        <end position="109"/>
    </location>
</feature>
<feature type="helix" evidence="11">
    <location>
        <begin position="112"/>
        <end position="114"/>
    </location>
</feature>
<feature type="strand" evidence="11">
    <location>
        <begin position="116"/>
        <end position="121"/>
    </location>
</feature>
<feature type="helix" evidence="11">
    <location>
        <begin position="143"/>
        <end position="149"/>
    </location>
</feature>
<feature type="strand" evidence="11">
    <location>
        <begin position="156"/>
        <end position="159"/>
    </location>
</feature>
<feature type="turn" evidence="11">
    <location>
        <begin position="164"/>
        <end position="167"/>
    </location>
</feature>
<feature type="strand" evidence="12">
    <location>
        <begin position="170"/>
        <end position="172"/>
    </location>
</feature>
<feature type="helix" evidence="11">
    <location>
        <begin position="178"/>
        <end position="181"/>
    </location>
</feature>
<feature type="turn" evidence="11">
    <location>
        <begin position="184"/>
        <end position="186"/>
    </location>
</feature>
<feature type="strand" evidence="11">
    <location>
        <begin position="188"/>
        <end position="194"/>
    </location>
</feature>
<feature type="helix" evidence="11">
    <location>
        <begin position="203"/>
        <end position="211"/>
    </location>
</feature>
<feature type="helix" evidence="11">
    <location>
        <begin position="216"/>
        <end position="229"/>
    </location>
</feature>
<feature type="strand" evidence="11">
    <location>
        <begin position="232"/>
        <end position="239"/>
    </location>
</feature>
<feature type="helix" evidence="11">
    <location>
        <begin position="243"/>
        <end position="250"/>
    </location>
</feature>
<feature type="turn" evidence="11">
    <location>
        <begin position="254"/>
        <end position="256"/>
    </location>
</feature>
<feature type="turn" evidence="11">
    <location>
        <begin position="261"/>
        <end position="263"/>
    </location>
</feature>
<feature type="helix" evidence="11">
    <location>
        <begin position="264"/>
        <end position="267"/>
    </location>
</feature>
<feature type="helix" evidence="11">
    <location>
        <begin position="269"/>
        <end position="271"/>
    </location>
</feature>
<feature type="helix" evidence="11">
    <location>
        <begin position="278"/>
        <end position="281"/>
    </location>
</feature>
<feature type="helix" evidence="11">
    <location>
        <begin position="285"/>
        <end position="299"/>
    </location>
</feature>
<feature type="strand" evidence="11">
    <location>
        <begin position="302"/>
        <end position="310"/>
    </location>
</feature>
<feature type="helix" evidence="11">
    <location>
        <begin position="314"/>
        <end position="321"/>
    </location>
</feature>
<feature type="helix" evidence="11">
    <location>
        <begin position="322"/>
        <end position="324"/>
    </location>
</feature>
<feature type="helix" evidence="11">
    <location>
        <begin position="336"/>
        <end position="345"/>
    </location>
</feature>
<feature type="strand" evidence="11">
    <location>
        <begin position="346"/>
        <end position="351"/>
    </location>
</feature>
<feature type="helix" evidence="11">
    <location>
        <begin position="356"/>
        <end position="367"/>
    </location>
</feature>
<feature type="strand" evidence="11">
    <location>
        <begin position="368"/>
        <end position="371"/>
    </location>
</feature>
<feature type="strand" evidence="11">
    <location>
        <begin position="375"/>
        <end position="377"/>
    </location>
</feature>
<organism>
    <name type="scientific">Caenorhabditis elegans</name>
    <dbReference type="NCBI Taxonomy" id="6239"/>
    <lineage>
        <taxon>Eukaryota</taxon>
        <taxon>Metazoa</taxon>
        <taxon>Ecdysozoa</taxon>
        <taxon>Nematoda</taxon>
        <taxon>Chromadorea</taxon>
        <taxon>Rhabditida</taxon>
        <taxon>Rhabditina</taxon>
        <taxon>Rhabditomorpha</taxon>
        <taxon>Rhabditoidea</taxon>
        <taxon>Rhabditidae</taxon>
        <taxon>Peloderinae</taxon>
        <taxon>Caenorhabditis</taxon>
    </lineage>
</organism>
<accession>Q18014</accession>